<proteinExistence type="inferred from homology"/>
<sequence length="103" mass="10811">MAAVSLSVSTVTPLGDRVFVKVAEAEEKTAGGIILPDNAKEKPQVGEIVAVGPGKRNDDGSRQAPEVKIGDKVLYSKYAGTDIKLGNDDYVLLSEKDILAVVA</sequence>
<evidence type="ECO:0000255" key="1">
    <source>
        <dbReference type="HAMAP-Rule" id="MF_00580"/>
    </source>
</evidence>
<evidence type="ECO:0000305" key="2"/>
<name>CH10_SYNE7</name>
<dbReference type="EMBL" id="M58751">
    <property type="protein sequence ID" value="AAA27313.1"/>
    <property type="molecule type" value="Genomic_DNA"/>
</dbReference>
<dbReference type="EMBL" id="CP000100">
    <property type="protein sequence ID" value="ABB58344.1"/>
    <property type="molecule type" value="Genomic_DNA"/>
</dbReference>
<dbReference type="PIR" id="A36721">
    <property type="entry name" value="A36721"/>
</dbReference>
<dbReference type="RefSeq" id="WP_011244098.1">
    <property type="nucleotide sequence ID" value="NZ_JACJTX010000001.1"/>
</dbReference>
<dbReference type="SMR" id="P22880"/>
<dbReference type="STRING" id="1140.Synpcc7942_2314"/>
<dbReference type="PaxDb" id="1140-Synpcc7942_2314"/>
<dbReference type="GeneID" id="72431201"/>
<dbReference type="KEGG" id="syf:Synpcc7942_2314"/>
<dbReference type="eggNOG" id="COG0234">
    <property type="taxonomic scope" value="Bacteria"/>
</dbReference>
<dbReference type="HOGENOM" id="CLU_132825_2_1_3"/>
<dbReference type="OrthoDB" id="9806791at2"/>
<dbReference type="BioCyc" id="SYNEL:SYNPCC7942_2314-MONOMER"/>
<dbReference type="Proteomes" id="UP000889800">
    <property type="component" value="Chromosome"/>
</dbReference>
<dbReference type="GO" id="GO:0005737">
    <property type="term" value="C:cytoplasm"/>
    <property type="evidence" value="ECO:0007669"/>
    <property type="project" value="UniProtKB-SubCell"/>
</dbReference>
<dbReference type="GO" id="GO:0005524">
    <property type="term" value="F:ATP binding"/>
    <property type="evidence" value="ECO:0007669"/>
    <property type="project" value="InterPro"/>
</dbReference>
<dbReference type="GO" id="GO:0046872">
    <property type="term" value="F:metal ion binding"/>
    <property type="evidence" value="ECO:0007669"/>
    <property type="project" value="TreeGrafter"/>
</dbReference>
<dbReference type="GO" id="GO:0044183">
    <property type="term" value="F:protein folding chaperone"/>
    <property type="evidence" value="ECO:0007669"/>
    <property type="project" value="InterPro"/>
</dbReference>
<dbReference type="GO" id="GO:0051087">
    <property type="term" value="F:protein-folding chaperone binding"/>
    <property type="evidence" value="ECO:0007669"/>
    <property type="project" value="TreeGrafter"/>
</dbReference>
<dbReference type="GO" id="GO:0051082">
    <property type="term" value="F:unfolded protein binding"/>
    <property type="evidence" value="ECO:0007669"/>
    <property type="project" value="TreeGrafter"/>
</dbReference>
<dbReference type="GO" id="GO:0051085">
    <property type="term" value="P:chaperone cofactor-dependent protein refolding"/>
    <property type="evidence" value="ECO:0007669"/>
    <property type="project" value="TreeGrafter"/>
</dbReference>
<dbReference type="CDD" id="cd00320">
    <property type="entry name" value="cpn10"/>
    <property type="match status" value="1"/>
</dbReference>
<dbReference type="FunFam" id="2.30.33.40:FF:000001">
    <property type="entry name" value="10 kDa chaperonin"/>
    <property type="match status" value="1"/>
</dbReference>
<dbReference type="Gene3D" id="2.30.33.40">
    <property type="entry name" value="GroES chaperonin"/>
    <property type="match status" value="1"/>
</dbReference>
<dbReference type="HAMAP" id="MF_00580">
    <property type="entry name" value="CH10"/>
    <property type="match status" value="1"/>
</dbReference>
<dbReference type="InterPro" id="IPR020818">
    <property type="entry name" value="Chaperonin_GroES"/>
</dbReference>
<dbReference type="InterPro" id="IPR037124">
    <property type="entry name" value="Chaperonin_GroES_sf"/>
</dbReference>
<dbReference type="InterPro" id="IPR018369">
    <property type="entry name" value="Chaprnonin_Cpn10_CS"/>
</dbReference>
<dbReference type="InterPro" id="IPR011032">
    <property type="entry name" value="GroES-like_sf"/>
</dbReference>
<dbReference type="NCBIfam" id="NF001527">
    <property type="entry name" value="PRK00364.1-2"/>
    <property type="match status" value="1"/>
</dbReference>
<dbReference type="NCBIfam" id="NF001530">
    <property type="entry name" value="PRK00364.1-6"/>
    <property type="match status" value="1"/>
</dbReference>
<dbReference type="NCBIfam" id="NF001531">
    <property type="entry name" value="PRK00364.2-2"/>
    <property type="match status" value="1"/>
</dbReference>
<dbReference type="NCBIfam" id="NF001533">
    <property type="entry name" value="PRK00364.2-4"/>
    <property type="match status" value="1"/>
</dbReference>
<dbReference type="NCBIfam" id="NF001534">
    <property type="entry name" value="PRK00364.2-5"/>
    <property type="match status" value="1"/>
</dbReference>
<dbReference type="PANTHER" id="PTHR10772">
    <property type="entry name" value="10 KDA HEAT SHOCK PROTEIN"/>
    <property type="match status" value="1"/>
</dbReference>
<dbReference type="PANTHER" id="PTHR10772:SF58">
    <property type="entry name" value="CO-CHAPERONIN GROES"/>
    <property type="match status" value="1"/>
</dbReference>
<dbReference type="Pfam" id="PF00166">
    <property type="entry name" value="Cpn10"/>
    <property type="match status" value="1"/>
</dbReference>
<dbReference type="PRINTS" id="PR00297">
    <property type="entry name" value="CHAPERONIN10"/>
</dbReference>
<dbReference type="SMART" id="SM00883">
    <property type="entry name" value="Cpn10"/>
    <property type="match status" value="1"/>
</dbReference>
<dbReference type="SUPFAM" id="SSF50129">
    <property type="entry name" value="GroES-like"/>
    <property type="match status" value="1"/>
</dbReference>
<dbReference type="PROSITE" id="PS00681">
    <property type="entry name" value="CHAPERONINS_CPN10"/>
    <property type="match status" value="1"/>
</dbReference>
<gene>
    <name evidence="1" type="primary">groES</name>
    <name evidence="1" type="synonym">groS</name>
    <name type="ordered locus">Synpcc7942_2314</name>
</gene>
<feature type="chain" id="PRO_0000174876" description="Co-chaperonin GroES">
    <location>
        <begin position="1"/>
        <end position="103"/>
    </location>
</feature>
<feature type="sequence conflict" description="In Ref. 1; AAA27313." evidence="2" ref="1">
    <original>R</original>
    <variation>S</variation>
    <location>
        <position position="56"/>
    </location>
</feature>
<keyword id="KW-0143">Chaperone</keyword>
<keyword id="KW-0963">Cytoplasm</keyword>
<keyword id="KW-1185">Reference proteome</keyword>
<comment type="function">
    <text evidence="1">Together with the chaperonin GroEL, plays an essential role in assisting protein folding. The GroEL-GroES system forms a nano-cage that allows encapsulation of the non-native substrate proteins and provides a physical environment optimized to promote and accelerate protein folding. GroES binds to the apical surface of the GroEL ring, thereby capping the opening of the GroEL channel.</text>
</comment>
<comment type="subunit">
    <text evidence="1">Heptamer of 7 subunits arranged in a ring. Interacts with the chaperonin GroEL.</text>
</comment>
<comment type="subcellular location">
    <subcellularLocation>
        <location evidence="1">Cytoplasm</location>
    </subcellularLocation>
</comment>
<comment type="similarity">
    <text evidence="1 2">Belongs to the GroES chaperonin family.</text>
</comment>
<accession>P22880</accession>
<accession>Q31KS5</accession>
<organism>
    <name type="scientific">Synechococcus elongatus (strain ATCC 33912 / PCC 7942 / FACHB-805)</name>
    <name type="common">Anacystis nidulans R2</name>
    <dbReference type="NCBI Taxonomy" id="1140"/>
    <lineage>
        <taxon>Bacteria</taxon>
        <taxon>Bacillati</taxon>
        <taxon>Cyanobacteriota</taxon>
        <taxon>Cyanophyceae</taxon>
        <taxon>Synechococcales</taxon>
        <taxon>Synechococcaceae</taxon>
        <taxon>Synechococcus</taxon>
    </lineage>
</organism>
<reference key="1">
    <citation type="journal article" date="1990" name="J. Bacteriol.">
        <title>Regulation and sequence of the Synechococcus sp. strain PCC 7942 groESL operon, encoding a cyanobacterial chaperonin.</title>
        <authorList>
            <person name="Webb R."/>
            <person name="Reddy K.J."/>
            <person name="Sherman L.A."/>
        </authorList>
    </citation>
    <scope>NUCLEOTIDE SEQUENCE [GENOMIC DNA]</scope>
</reference>
<reference key="2">
    <citation type="submission" date="2005-08" db="EMBL/GenBank/DDBJ databases">
        <title>Complete sequence of chromosome 1 of Synechococcus elongatus PCC 7942.</title>
        <authorList>
            <consortium name="US DOE Joint Genome Institute"/>
            <person name="Copeland A."/>
            <person name="Lucas S."/>
            <person name="Lapidus A."/>
            <person name="Barry K."/>
            <person name="Detter J.C."/>
            <person name="Glavina T."/>
            <person name="Hammon N."/>
            <person name="Israni S."/>
            <person name="Pitluck S."/>
            <person name="Schmutz J."/>
            <person name="Larimer F."/>
            <person name="Land M."/>
            <person name="Kyrpides N."/>
            <person name="Lykidis A."/>
            <person name="Golden S."/>
            <person name="Richardson P."/>
        </authorList>
    </citation>
    <scope>NUCLEOTIDE SEQUENCE [LARGE SCALE GENOMIC DNA]</scope>
    <source>
        <strain>ATCC 33912 / PCC 7942 / FACHB-805</strain>
    </source>
</reference>
<protein>
    <recommendedName>
        <fullName evidence="1">Co-chaperonin GroES</fullName>
    </recommendedName>
    <alternativeName>
        <fullName evidence="1">10 kDa chaperonin</fullName>
    </alternativeName>
    <alternativeName>
        <fullName evidence="1">Chaperonin-10</fullName>
        <shortName evidence="1">Cpn10</shortName>
    </alternativeName>
</protein>